<reference evidence="8 9" key="1">
    <citation type="submission" date="1996-11" db="EMBL/GenBank/DDBJ databases">
        <authorList>
            <person name="Hobert O."/>
            <person name="Kohara Y."/>
            <person name="Ruvkun G."/>
        </authorList>
    </citation>
    <scope>NUCLEOTIDE SEQUENCE [MRNA] (ISOFORMS A AND B)</scope>
    <source>
        <strain evidence="8">Bristol N2</strain>
    </source>
</reference>
<reference evidence="10" key="2">
    <citation type="journal article" date="1998" name="Science">
        <title>Genome sequence of the nematode C. elegans: a platform for investigating biology.</title>
        <authorList>
            <consortium name="The C. elegans sequencing consortium"/>
        </authorList>
    </citation>
    <scope>NUCLEOTIDE SEQUENCE [LARGE SCALE GENOMIC DNA]</scope>
    <source>
        <strain evidence="10">Bristol N2</strain>
    </source>
</reference>
<reference evidence="7" key="3">
    <citation type="journal article" date="2000" name="Dev. Biol.">
        <title>The Caenorhabditis elegans Ldb/NLI/Clim orthologue ldb-1 is required for neuronal function.</title>
        <authorList>
            <person name="Cassata G."/>
            <person name="Roehrig S."/>
            <person name="Kuhn F."/>
            <person name="Hauri H.P."/>
            <person name="Baumeister R."/>
            <person name="Buerglin T.R."/>
        </authorList>
    </citation>
    <scope>FUNCTION</scope>
    <scope>TISSUE SPECIFICITY</scope>
    <scope>DEVELOPMENTAL STAGE</scope>
    <scope>DISRUPTION PHENOTYPE</scope>
</reference>
<reference evidence="7" key="4">
    <citation type="journal article" date="2003" name="Development">
        <title>The C. elegans LIM homeobox gene lin-11 specifies multiple cell fates during vulval development.</title>
        <authorList>
            <person name="Gupta B.P."/>
            <person name="Wang M."/>
            <person name="Sternberg P.W."/>
        </authorList>
    </citation>
    <scope>FUNCTION</scope>
    <scope>TISSUE SPECIFICITY</scope>
    <scope>DEVELOPMENTAL STAGE</scope>
    <scope>DISRUPTION PHENOTYPE</scope>
</reference>
<reference evidence="7" key="5">
    <citation type="journal article" date="2011" name="Development">
        <title>Regulation of C. elegans presynaptic differentiation and neurite branching via a novel signaling pathway initiated by SAM-10.</title>
        <authorList>
            <person name="Zheng Q."/>
            <person name="Schaefer A.M."/>
            <person name="Nonet M.L."/>
        </authorList>
    </citation>
    <scope>FUNCTION</scope>
</reference>
<reference evidence="7" key="6">
    <citation type="journal article" date="2020" name="Biochim. Biophys. Acta">
        <title>LDB1 and the SWI/SNF complex participate in both transcriptional activation and repression by Caenorhabditis elegans BLIMP1/PRDM1.</title>
        <authorList>
            <person name="Fong H.T."/>
            <person name="Hagen T."/>
            <person name="Inoue T."/>
        </authorList>
    </citation>
    <scope>FUNCTION</scope>
    <scope>DISRUPTION PHENOTYPE</scope>
    <scope>INTERACTION WITH BLMP-1</scope>
</reference>
<keyword id="KW-0025">Alternative splicing</keyword>
<keyword id="KW-1185">Reference proteome</keyword>
<protein>
    <recommendedName>
        <fullName evidence="11">LIM domain-binding protein 1</fullName>
    </recommendedName>
</protein>
<organism evidence="10">
    <name type="scientific">Caenorhabditis elegans</name>
    <dbReference type="NCBI Taxonomy" id="6239"/>
    <lineage>
        <taxon>Eukaryota</taxon>
        <taxon>Metazoa</taxon>
        <taxon>Ecdysozoa</taxon>
        <taxon>Nematoda</taxon>
        <taxon>Chromadorea</taxon>
        <taxon>Rhabditida</taxon>
        <taxon>Rhabditina</taxon>
        <taxon>Rhabditomorpha</taxon>
        <taxon>Rhabditoidea</taxon>
        <taxon>Rhabditidae</taxon>
        <taxon>Peloderinae</taxon>
        <taxon>Caenorhabditis</taxon>
    </lineage>
</organism>
<accession>G5EEL0</accession>
<accession>Q8I4H8</accession>
<accession>Q8IU51</accession>
<sequence>MYGHHPDYGYGNYGHPPPFAGPESSNSHYGMPPSQGTNSQNNMMMRSQATEPQPIGNTVSPLEFRIHDMNRRLYIFSSTGVSENDQQQWWDAFSHEFFDDDCKLWFVIGSEPVAFASRERYIINRQFIPKFFRSIFDSGMRELQYVLRGPSRECTLANGSQAYENENVLQITRYDQSSQFEVNTEGKLYVEFAPFDEVMNYRIKAWTLELKRSNEFVYNQNTADYRVEAQNPEQENKPRMGFFKSTFNLMTMLKILDPMQSIMSSAKSAPAITPREVMKRTLFQHHQVRQQNMRQQQLNQQMMIPAPEPEKPKPARKRQRKPAANPRGSKKATAAAAAAAAAATNGVPPTVPTASPANNQQFPPNPMTSQFQQMSYPDVMVVGEPSMMGSEFGENDERTISRVENSQYDPNAMQMQSLGQGPNSSMNINGRNMMNQHHPGMQPPPGQQHMPPHSMGSQMPTSMHNPMHMPPGSMQGHGGMPPMPSTMANQMPPPNLPPHTMSNQMPNSRMPPMQGQMPPSGMPGQMSNPNMMGSGMPPMSMSSQMPGSMSNPMPNQMPGGMQMNQMPPPNYSQYTGGPPPQWPPPNSAMITG</sequence>
<name>LIDB1_CAEEL</name>
<gene>
    <name evidence="11" type="primary">ldb-1</name>
    <name evidence="11" type="ORF">F58A3.1</name>
</gene>
<feature type="chain" id="PRO_0000451156" description="LIM domain-binding protein 1">
    <location>
        <begin position="1"/>
        <end position="592"/>
    </location>
</feature>
<feature type="domain" description="LIM interaction domain (LID)" evidence="1">
    <location>
        <begin position="378"/>
        <end position="417"/>
    </location>
</feature>
<feature type="region of interest" description="Disordered" evidence="2">
    <location>
        <begin position="14"/>
        <end position="41"/>
    </location>
</feature>
<feature type="region of interest" description="Disordered" evidence="2">
    <location>
        <begin position="305"/>
        <end position="368"/>
    </location>
</feature>
<feature type="region of interest" description="Disordered" evidence="2">
    <location>
        <begin position="437"/>
        <end position="458"/>
    </location>
</feature>
<feature type="region of interest" description="Disordered" evidence="2">
    <location>
        <begin position="559"/>
        <end position="592"/>
    </location>
</feature>
<feature type="compositionally biased region" description="Polar residues" evidence="2">
    <location>
        <begin position="23"/>
        <end position="41"/>
    </location>
</feature>
<feature type="compositionally biased region" description="Low complexity" evidence="2">
    <location>
        <begin position="322"/>
        <end position="344"/>
    </location>
</feature>
<feature type="compositionally biased region" description="Polar residues" evidence="2">
    <location>
        <begin position="352"/>
        <end position="368"/>
    </location>
</feature>
<feature type="compositionally biased region" description="Pro residues" evidence="2">
    <location>
        <begin position="577"/>
        <end position="586"/>
    </location>
</feature>
<feature type="splice variant" id="VSP_060758" description="In isoform b." evidence="7">
    <original>YGHHPDYGYGNYGHPPPFAGPESSNSHYGMPPSQGTNSQNNMM</original>
    <variation>FHRPPSARPPLNHVDQLKSLQATALGKPG</variation>
    <location>
        <begin position="2"/>
        <end position="44"/>
    </location>
</feature>
<comment type="function">
    <text evidence="3 4 5 6">Binds to the LIM domain of LIM domain-containing transcription factors (PubMed:10993673). Required for the blmp-1-mediated transcriptional activation or repression of several hypodermal genes, such as bed-3 (PubMed:32417234). Regulates sam-10 nuclear localization in PLM neurons (PubMed:21115607). Has a role in synaptic differentiation of PLM mechanosensory neurons (PubMed:21115607). Involved in gonadogenesis (PubMed:12736204).</text>
</comment>
<comment type="subunit">
    <text evidence="6">Interacts with blmp-1.</text>
</comment>
<comment type="alternative products">
    <event type="alternative splicing"/>
    <isoform>
        <id>G5EEL0-1</id>
        <name evidence="11">a</name>
        <sequence type="displayed"/>
    </isoform>
    <isoform>
        <id>G5EEL0-2</id>
        <name evidence="12">b</name>
        <sequence type="described" ref="VSP_060758"/>
    </isoform>
</comment>
<comment type="tissue specificity">
    <text evidence="3 4">Expressed in all neurons and some other tissues of the adult, including vulval muscle, and, in males, all the neurons of the tail region (PubMed:10993673). Expressed in vulval cells (PubMed:10993673, PubMed:12736204).</text>
</comment>
<comment type="developmental stage">
    <text evidence="3 4">First expressed widely in 200- to 260-minute-old embryo, except in hyp-7 cells (PubMed:10993673). Expression becomes more restricted to the anterior, ventral, and posterior part in the comma stage embryo (PubMed:10993673). Expressed in all neurons and some other tissues of the larva (PubMed:10993673). Expressed in primary vulval cells during the L4 larval stage (PubMed:12736204).</text>
</comment>
<comment type="disruption phenotype">
    <text evidence="3 4 6">RNAi-mediated knockdown causes mechanosensory defects and uncoordination in L1 and L2 larval stage animals; phenotypes become weaker in later stages and eventually disappear in young adults (PubMed:10993673). RNAi-mediated knockdown causes defects in vulval morphology and gonad arms (PubMed:12736204). RNAi-mediated knockdown reduces the level of bed-3 and col-124 mRNAs and increases the level of lin-29 mRNA (PubMed:32417234).</text>
</comment>
<comment type="similarity">
    <text evidence="7">Belongs to the LDB family.</text>
</comment>
<comment type="sequence caution" evidence="7">
    <conflict type="erroneous initiation">
        <sequence resource="EMBL-CDS" id="AAB38367"/>
    </conflict>
    <text>Extended N-terminus.</text>
</comment>
<dbReference type="EMBL" id="U80220">
    <property type="protein sequence ID" value="AAB38366.1"/>
    <property type="molecule type" value="mRNA"/>
</dbReference>
<dbReference type="EMBL" id="U80221">
    <property type="protein sequence ID" value="AAB38367.1"/>
    <property type="status" value="ALT_INIT"/>
    <property type="molecule type" value="mRNA"/>
</dbReference>
<dbReference type="EMBL" id="BX284606">
    <property type="protein sequence ID" value="CAB02669.1"/>
    <property type="molecule type" value="Genomic_DNA"/>
</dbReference>
<dbReference type="EMBL" id="BX284606">
    <property type="protein sequence ID" value="CAB02672.1"/>
    <property type="molecule type" value="Genomic_DNA"/>
</dbReference>
<dbReference type="PIR" id="T22885">
    <property type="entry name" value="T22885"/>
</dbReference>
<dbReference type="PIR" id="T22888">
    <property type="entry name" value="T22888"/>
</dbReference>
<dbReference type="RefSeq" id="NP_001379181.1">
    <molecule id="G5EEL0-1"/>
    <property type="nucleotide sequence ID" value="NM_001392840.1"/>
</dbReference>
<dbReference type="RefSeq" id="NP_509845.1">
    <molecule id="G5EEL0-2"/>
    <property type="nucleotide sequence ID" value="NM_077444.6"/>
</dbReference>
<dbReference type="RefSeq" id="NP_509846.1">
    <property type="nucleotide sequence ID" value="NM_077445.4"/>
</dbReference>
<dbReference type="SMR" id="G5EEL0"/>
<dbReference type="FunCoup" id="G5EEL0">
    <property type="interactions" value="1523"/>
</dbReference>
<dbReference type="PeptideAtlas" id="G5EEL0"/>
<dbReference type="EnsemblMetazoa" id="F58A3.1a.1">
    <molecule id="G5EEL0-1"/>
    <property type="protein sequence ID" value="F58A3.1a.1"/>
    <property type="gene ID" value="WBGene00002261"/>
</dbReference>
<dbReference type="EnsemblMetazoa" id="F58A3.1a.2">
    <molecule id="G5EEL0-1"/>
    <property type="protein sequence ID" value="F58A3.1a.2"/>
    <property type="gene ID" value="WBGene00002261"/>
</dbReference>
<dbReference type="EnsemblMetazoa" id="F58A3.1b.1">
    <molecule id="G5EEL0-2"/>
    <property type="protein sequence ID" value="F58A3.1b.1"/>
    <property type="gene ID" value="WBGene00002261"/>
</dbReference>
<dbReference type="EnsemblMetazoa" id="F58A3.1b.2">
    <molecule id="G5EEL0-2"/>
    <property type="protein sequence ID" value="F58A3.1b.2"/>
    <property type="gene ID" value="WBGene00002261"/>
</dbReference>
<dbReference type="GeneID" id="181292"/>
<dbReference type="KEGG" id="cel:CELE_F58A3.1"/>
<dbReference type="UCSC" id="F58A3.1c">
    <property type="organism name" value="c. elegans"/>
</dbReference>
<dbReference type="AGR" id="WB:WBGene00002261"/>
<dbReference type="CTD" id="181292"/>
<dbReference type="WormBase" id="F58A3.1a">
    <molecule id="G5EEL0-1"/>
    <property type="protein sequence ID" value="CE11350"/>
    <property type="gene ID" value="WBGene00002261"/>
    <property type="gene designation" value="ldb-1"/>
</dbReference>
<dbReference type="WormBase" id="F58A3.1b">
    <molecule id="G5EEL0-2"/>
    <property type="protein sequence ID" value="CE11352"/>
    <property type="gene ID" value="WBGene00002261"/>
    <property type="gene designation" value="ldb-1"/>
</dbReference>
<dbReference type="HOGENOM" id="CLU_434933_0_0_1"/>
<dbReference type="InParanoid" id="G5EEL0"/>
<dbReference type="OrthoDB" id="774557at2759"/>
<dbReference type="SignaLink" id="G5EEL0"/>
<dbReference type="PRO" id="PR:G5EEL0"/>
<dbReference type="Proteomes" id="UP000001940">
    <property type="component" value="Chromosome X"/>
</dbReference>
<dbReference type="Bgee" id="WBGene00002261">
    <property type="expression patterns" value="Expressed in pharyngeal muscle cell (C elegans) and 4 other cell types or tissues"/>
</dbReference>
<dbReference type="ExpressionAtlas" id="G5EEL0">
    <property type="expression patterns" value="baseline and differential"/>
</dbReference>
<dbReference type="GO" id="GO:0005634">
    <property type="term" value="C:nucleus"/>
    <property type="evidence" value="ECO:0000318"/>
    <property type="project" value="GO_Central"/>
</dbReference>
<dbReference type="GO" id="GO:0005667">
    <property type="term" value="C:transcription regulator complex"/>
    <property type="evidence" value="ECO:0000318"/>
    <property type="project" value="GO_Central"/>
</dbReference>
<dbReference type="GO" id="GO:0003700">
    <property type="term" value="F:DNA-binding transcription factor activity"/>
    <property type="evidence" value="ECO:0000314"/>
    <property type="project" value="WormBase"/>
</dbReference>
<dbReference type="GO" id="GO:0140297">
    <property type="term" value="F:DNA-binding transcription factor binding"/>
    <property type="evidence" value="ECO:0000353"/>
    <property type="project" value="UniProtKB"/>
</dbReference>
<dbReference type="GO" id="GO:0030274">
    <property type="term" value="F:LIM domain binding"/>
    <property type="evidence" value="ECO:0000353"/>
    <property type="project" value="WormBase"/>
</dbReference>
<dbReference type="GO" id="GO:0003712">
    <property type="term" value="F:transcription coregulator activity"/>
    <property type="evidence" value="ECO:0000318"/>
    <property type="project" value="GO_Central"/>
</dbReference>
<dbReference type="GO" id="GO:0040011">
    <property type="term" value="P:locomotion"/>
    <property type="evidence" value="ECO:0000315"/>
    <property type="project" value="WormBase"/>
</dbReference>
<dbReference type="GO" id="GO:0007638">
    <property type="term" value="P:mechanosensory behavior"/>
    <property type="evidence" value="ECO:0000315"/>
    <property type="project" value="WormBase"/>
</dbReference>
<dbReference type="GO" id="GO:0000122">
    <property type="term" value="P:negative regulation of transcription by RNA polymerase II"/>
    <property type="evidence" value="ECO:0000315"/>
    <property type="project" value="UniProtKB"/>
</dbReference>
<dbReference type="GO" id="GO:0007399">
    <property type="term" value="P:nervous system development"/>
    <property type="evidence" value="ECO:0000318"/>
    <property type="project" value="GO_Central"/>
</dbReference>
<dbReference type="GO" id="GO:0045944">
    <property type="term" value="P:positive regulation of transcription by RNA polymerase II"/>
    <property type="evidence" value="ECO:0000315"/>
    <property type="project" value="UniProtKB"/>
</dbReference>
<dbReference type="GO" id="GO:0040026">
    <property type="term" value="P:positive regulation of vulval development"/>
    <property type="evidence" value="ECO:0000315"/>
    <property type="project" value="UniProtKB"/>
</dbReference>
<dbReference type="GO" id="GO:0034504">
    <property type="term" value="P:protein localization to nucleus"/>
    <property type="evidence" value="ECO:0000315"/>
    <property type="project" value="WormBase"/>
</dbReference>
<dbReference type="GO" id="GO:0007416">
    <property type="term" value="P:synapse assembly"/>
    <property type="evidence" value="ECO:0000315"/>
    <property type="project" value="WormBase"/>
</dbReference>
<dbReference type="GO" id="GO:0040025">
    <property type="term" value="P:vulval development"/>
    <property type="evidence" value="ECO:0000315"/>
    <property type="project" value="WormBase"/>
</dbReference>
<dbReference type="Gene3D" id="2.10.110.10">
    <property type="entry name" value="Cysteine Rich Protein"/>
    <property type="match status" value="1"/>
</dbReference>
<dbReference type="InterPro" id="IPR041363">
    <property type="entry name" value="LID"/>
</dbReference>
<dbReference type="InterPro" id="IPR029005">
    <property type="entry name" value="LIM-bd/SEUSS"/>
</dbReference>
<dbReference type="PANTHER" id="PTHR10378">
    <property type="entry name" value="LIM DOMAIN-BINDING PROTEIN"/>
    <property type="match status" value="1"/>
</dbReference>
<dbReference type="Pfam" id="PF17916">
    <property type="entry name" value="LID"/>
    <property type="match status" value="1"/>
</dbReference>
<dbReference type="Pfam" id="PF01803">
    <property type="entry name" value="LIM_bind"/>
    <property type="match status" value="1"/>
</dbReference>
<dbReference type="PROSITE" id="PS51957">
    <property type="entry name" value="LID"/>
    <property type="match status" value="1"/>
</dbReference>
<evidence type="ECO:0000255" key="1">
    <source>
        <dbReference type="PROSITE-ProRule" id="PRU01302"/>
    </source>
</evidence>
<evidence type="ECO:0000256" key="2">
    <source>
        <dbReference type="SAM" id="MobiDB-lite"/>
    </source>
</evidence>
<evidence type="ECO:0000269" key="3">
    <source>
    </source>
</evidence>
<evidence type="ECO:0000269" key="4">
    <source>
    </source>
</evidence>
<evidence type="ECO:0000269" key="5">
    <source>
    </source>
</evidence>
<evidence type="ECO:0000269" key="6">
    <source>
    </source>
</evidence>
<evidence type="ECO:0000305" key="7"/>
<evidence type="ECO:0000312" key="8">
    <source>
        <dbReference type="EMBL" id="AAB38366.1"/>
    </source>
</evidence>
<evidence type="ECO:0000312" key="9">
    <source>
        <dbReference type="EMBL" id="AAB38367.1"/>
    </source>
</evidence>
<evidence type="ECO:0000312" key="10">
    <source>
        <dbReference type="Proteomes" id="UP000001940"/>
    </source>
</evidence>
<evidence type="ECO:0000312" key="11">
    <source>
        <dbReference type="WormBase" id="F58A3.1a"/>
    </source>
</evidence>
<evidence type="ECO:0000312" key="12">
    <source>
        <dbReference type="WormBase" id="F58A3.1b"/>
    </source>
</evidence>
<proteinExistence type="evidence at protein level"/>